<comment type="function">
    <text evidence="2">Antimicrobial peptide. Active against Gram-negative bacterium E.coli (MIC=6 uM) and against Gram-positive bacterium S.aureus (MIC=12.5 uM).</text>
</comment>
<comment type="subcellular location">
    <subcellularLocation>
        <location evidence="1">Secreted</location>
    </subcellularLocation>
</comment>
<comment type="tissue specificity">
    <text evidence="5">Expressed by the skin glands.</text>
</comment>
<comment type="mass spectrometry" mass="2272.4" method="MALDI" evidence="2"/>
<comment type="similarity">
    <text evidence="3">Belongs to the frog skin active peptide (FSAP) family. Brevinin subfamily.</text>
</comment>
<sequence length="22" mass="2274">FFGSIIGALAKGLPSLISLIKK</sequence>
<evidence type="ECO:0000250" key="1">
    <source>
        <dbReference type="UniProtKB" id="P86027"/>
    </source>
</evidence>
<evidence type="ECO:0000269" key="2">
    <source>
    </source>
</evidence>
<evidence type="ECO:0000303" key="3">
    <source>
    </source>
</evidence>
<evidence type="ECO:0000305" key="4"/>
<evidence type="ECO:0000305" key="5">
    <source>
    </source>
</evidence>
<feature type="peptide" id="PRO_0000443439" description="Brevinin-1OKc" evidence="2">
    <location>
        <begin position="1"/>
        <end position="22"/>
    </location>
</feature>
<feature type="modified residue" description="Lysine amide" evidence="2">
    <location>
        <position position="22"/>
    </location>
</feature>
<organism evidence="3">
    <name type="scientific">Nidirana okinavana</name>
    <name type="common">Kampira Falls frog</name>
    <name type="synonym">Babina okinavana</name>
    <dbReference type="NCBI Taxonomy" id="156870"/>
    <lineage>
        <taxon>Eukaryota</taxon>
        <taxon>Metazoa</taxon>
        <taxon>Chordata</taxon>
        <taxon>Craniata</taxon>
        <taxon>Vertebrata</taxon>
        <taxon>Euteleostomi</taxon>
        <taxon>Amphibia</taxon>
        <taxon>Batrachia</taxon>
        <taxon>Anura</taxon>
        <taxon>Neobatrachia</taxon>
        <taxon>Ranoidea</taxon>
        <taxon>Ranidae</taxon>
        <taxon>Nidirana</taxon>
    </lineage>
</organism>
<proteinExistence type="evidence at protein level"/>
<reference evidence="4" key="1">
    <citation type="journal article" date="2005" name="Peptides">
        <title>A family of acyclic brevinin-1 peptides from the skin of the Ryukyu brown frog Rana okinavana.</title>
        <authorList>
            <person name="Conlon J.M."/>
            <person name="Sonnevend A."/>
            <person name="Jouenne T."/>
            <person name="Coquet L."/>
            <person name="Cosquer D."/>
            <person name="Vaudry H."/>
            <person name="Iwamuro S."/>
        </authorList>
    </citation>
    <scope>PROTEIN SEQUENCE</scope>
    <scope>MASS SPECTROMETRY</scope>
    <scope>AMIDATION AT LYS-22</scope>
    <source>
        <tissue evidence="3">Skin</tissue>
    </source>
</reference>
<accession>C0HL10</accession>
<dbReference type="GO" id="GO:0005576">
    <property type="term" value="C:extracellular region"/>
    <property type="evidence" value="ECO:0000314"/>
    <property type="project" value="UniProtKB"/>
</dbReference>
<dbReference type="GO" id="GO:0050829">
    <property type="term" value="P:defense response to Gram-negative bacterium"/>
    <property type="evidence" value="ECO:0000314"/>
    <property type="project" value="UniProtKB"/>
</dbReference>
<dbReference type="GO" id="GO:0050830">
    <property type="term" value="P:defense response to Gram-positive bacterium"/>
    <property type="evidence" value="ECO:0000314"/>
    <property type="project" value="UniProtKB"/>
</dbReference>
<dbReference type="GO" id="GO:0031640">
    <property type="term" value="P:killing of cells of another organism"/>
    <property type="evidence" value="ECO:0000314"/>
    <property type="project" value="UniProtKB"/>
</dbReference>
<keyword id="KW-0027">Amidation</keyword>
<keyword id="KW-0044">Antibiotic</keyword>
<keyword id="KW-0929">Antimicrobial</keyword>
<keyword id="KW-0903">Direct protein sequencing</keyword>
<keyword id="KW-0964">Secreted</keyword>
<name>BR1C_NIDOK</name>
<protein>
    <recommendedName>
        <fullName evidence="3">Brevinin-1OKc</fullName>
    </recommendedName>
</protein>